<feature type="chain" id="PRO_0000371529" description="Mannitol-1-phosphate 5-dehydrogenase">
    <location>
        <begin position="1"/>
        <end position="388"/>
    </location>
</feature>
<feature type="active site" evidence="1">
    <location>
        <position position="213"/>
    </location>
</feature>
<feature type="binding site" evidence="1">
    <location>
        <begin position="5"/>
        <end position="16"/>
    </location>
    <ligand>
        <name>NAD(+)</name>
        <dbReference type="ChEBI" id="CHEBI:57540"/>
    </ligand>
</feature>
<accession>A1DGY9</accession>
<name>MTLD_NEOFI</name>
<organism>
    <name type="scientific">Neosartorya fischeri (strain ATCC 1020 / DSM 3700 / CBS 544.65 / FGSC A1164 / JCM 1740 / NRRL 181 / WB 181)</name>
    <name type="common">Aspergillus fischerianus</name>
    <dbReference type="NCBI Taxonomy" id="331117"/>
    <lineage>
        <taxon>Eukaryota</taxon>
        <taxon>Fungi</taxon>
        <taxon>Dikarya</taxon>
        <taxon>Ascomycota</taxon>
        <taxon>Pezizomycotina</taxon>
        <taxon>Eurotiomycetes</taxon>
        <taxon>Eurotiomycetidae</taxon>
        <taxon>Eurotiales</taxon>
        <taxon>Aspergillaceae</taxon>
        <taxon>Aspergillus</taxon>
        <taxon>Aspergillus subgen. Fumigati</taxon>
    </lineage>
</organism>
<sequence length="388" mass="42891">MGKKAIQFGGGNIGRGFVAEFLHEAGYEVVFIDVVDKIIDALKSTPSYEVSEVSEEGEKTKTITNYRAINSKTNEEDVVKEIGTADVVTCAVGPNVLKFIAPVIAKGIDARTASKPVAVIACENAIGATDTLRGFIEQHTDKDRLSSMSERARFANSAIDRIVPNQPPNAGLNVRIEKFYEWTVEQTPFGEFGHPDIPAIHWVDDLKPYIERKLFTVNTGHATTAYYGHVRGKKMIADALADAEIRKIVHNVLEQTAMLITTKHEITEQEQNEYVDTIVKRMSNPFLEDNVERVGRAPLRKLSRNERFIGPASQLAEKGLPFDALLGSIEMALRFQNVPGDEESAELAKILKEMSADEATGKLTGLEKSHPLYKPVQNVVAKVQKDSK</sequence>
<protein>
    <recommendedName>
        <fullName>Mannitol-1-phosphate 5-dehydrogenase</fullName>
        <shortName>M1PDH</shortName>
        <shortName>MPD</shortName>
        <shortName>MPDH</shortName>
        <ecNumber>1.1.1.17</ecNumber>
    </recommendedName>
</protein>
<reference key="1">
    <citation type="journal article" date="2008" name="PLoS Genet.">
        <title>Genomic islands in the pathogenic filamentous fungus Aspergillus fumigatus.</title>
        <authorList>
            <person name="Fedorova N.D."/>
            <person name="Khaldi N."/>
            <person name="Joardar V.S."/>
            <person name="Maiti R."/>
            <person name="Amedeo P."/>
            <person name="Anderson M.J."/>
            <person name="Crabtree J."/>
            <person name="Silva J.C."/>
            <person name="Badger J.H."/>
            <person name="Albarraq A."/>
            <person name="Angiuoli S."/>
            <person name="Bussey H."/>
            <person name="Bowyer P."/>
            <person name="Cotty P.J."/>
            <person name="Dyer P.S."/>
            <person name="Egan A."/>
            <person name="Galens K."/>
            <person name="Fraser-Liggett C.M."/>
            <person name="Haas B.J."/>
            <person name="Inman J.M."/>
            <person name="Kent R."/>
            <person name="Lemieux S."/>
            <person name="Malavazi I."/>
            <person name="Orvis J."/>
            <person name="Roemer T."/>
            <person name="Ronning C.M."/>
            <person name="Sundaram J.P."/>
            <person name="Sutton G."/>
            <person name="Turner G."/>
            <person name="Venter J.C."/>
            <person name="White O.R."/>
            <person name="Whitty B.R."/>
            <person name="Youngman P."/>
            <person name="Wolfe K.H."/>
            <person name="Goldman G.H."/>
            <person name="Wortman J.R."/>
            <person name="Jiang B."/>
            <person name="Denning D.W."/>
            <person name="Nierman W.C."/>
        </authorList>
    </citation>
    <scope>NUCLEOTIDE SEQUENCE [LARGE SCALE GENOMIC DNA]</scope>
    <source>
        <strain>ATCC 1020 / DSM 3700 / CBS 544.65 / FGSC A1164 / JCM 1740 / NRRL 181 / WB 181</strain>
    </source>
</reference>
<proteinExistence type="inferred from homology"/>
<keyword id="KW-0520">NAD</keyword>
<keyword id="KW-0560">Oxidoreductase</keyword>
<keyword id="KW-1185">Reference proteome</keyword>
<evidence type="ECO:0000250" key="1"/>
<evidence type="ECO:0000305" key="2"/>
<gene>
    <name type="primary">mpdA</name>
    <name type="ORF">NFIA_086010</name>
</gene>
<dbReference type="EC" id="1.1.1.17"/>
<dbReference type="EMBL" id="DS027696">
    <property type="protein sequence ID" value="EAW18646.1"/>
    <property type="molecule type" value="Genomic_DNA"/>
</dbReference>
<dbReference type="RefSeq" id="XP_001260543.1">
    <property type="nucleotide sequence ID" value="XM_001260542.1"/>
</dbReference>
<dbReference type="SMR" id="A1DGY9"/>
<dbReference type="STRING" id="331117.A1DGY9"/>
<dbReference type="EnsemblFungi" id="EAW18646">
    <property type="protein sequence ID" value="EAW18646"/>
    <property type="gene ID" value="NFIA_086010"/>
</dbReference>
<dbReference type="GeneID" id="4587101"/>
<dbReference type="KEGG" id="nfi:NFIA_086010"/>
<dbReference type="VEuPathDB" id="FungiDB:NFIA_086010"/>
<dbReference type="eggNOG" id="ENOG502QVPN">
    <property type="taxonomic scope" value="Eukaryota"/>
</dbReference>
<dbReference type="HOGENOM" id="CLU_036089_0_1_1"/>
<dbReference type="OMA" id="APFIERK"/>
<dbReference type="OrthoDB" id="418169at2759"/>
<dbReference type="Proteomes" id="UP000006702">
    <property type="component" value="Unassembled WGS sequence"/>
</dbReference>
<dbReference type="GO" id="GO:0005829">
    <property type="term" value="C:cytosol"/>
    <property type="evidence" value="ECO:0007669"/>
    <property type="project" value="TreeGrafter"/>
</dbReference>
<dbReference type="GO" id="GO:0008926">
    <property type="term" value="F:mannitol-1-phosphate 5-dehydrogenase activity"/>
    <property type="evidence" value="ECO:0007669"/>
    <property type="project" value="UniProtKB-EC"/>
</dbReference>
<dbReference type="GO" id="GO:0019592">
    <property type="term" value="P:mannitol catabolic process"/>
    <property type="evidence" value="ECO:0007669"/>
    <property type="project" value="TreeGrafter"/>
</dbReference>
<dbReference type="FunFam" id="1.10.1040.10:FF:000009">
    <property type="entry name" value="Mannitol-1-phosphate 5-dehydrogenase"/>
    <property type="match status" value="1"/>
</dbReference>
<dbReference type="FunFam" id="3.40.50.720:FF:000316">
    <property type="entry name" value="Mannitol-1-phosphate 5-dehydrogenase"/>
    <property type="match status" value="1"/>
</dbReference>
<dbReference type="Gene3D" id="1.10.1040.10">
    <property type="entry name" value="N-(1-d-carboxylethyl)-l-norvaline Dehydrogenase, domain 2"/>
    <property type="match status" value="1"/>
</dbReference>
<dbReference type="Gene3D" id="3.40.50.720">
    <property type="entry name" value="NAD(P)-binding Rossmann-like Domain"/>
    <property type="match status" value="1"/>
</dbReference>
<dbReference type="HAMAP" id="MF_00196">
    <property type="entry name" value="Mannitol_dehydrog"/>
    <property type="match status" value="1"/>
</dbReference>
<dbReference type="InterPro" id="IPR008927">
    <property type="entry name" value="6-PGluconate_DH-like_C_sf"/>
</dbReference>
<dbReference type="InterPro" id="IPR013328">
    <property type="entry name" value="6PGD_dom2"/>
</dbReference>
<dbReference type="InterPro" id="IPR023028">
    <property type="entry name" value="Mannitol_1_phos_5_DH"/>
</dbReference>
<dbReference type="InterPro" id="IPR000669">
    <property type="entry name" value="Mannitol_DH"/>
</dbReference>
<dbReference type="InterPro" id="IPR013118">
    <property type="entry name" value="Mannitol_DH_C"/>
</dbReference>
<dbReference type="InterPro" id="IPR013131">
    <property type="entry name" value="Mannitol_DH_N"/>
</dbReference>
<dbReference type="InterPro" id="IPR036291">
    <property type="entry name" value="NAD(P)-bd_dom_sf"/>
</dbReference>
<dbReference type="NCBIfam" id="NF002652">
    <property type="entry name" value="PRK02318.2-5"/>
    <property type="match status" value="1"/>
</dbReference>
<dbReference type="PANTHER" id="PTHR30524:SF0">
    <property type="entry name" value="ALTRONATE OXIDOREDUCTASE-RELATED"/>
    <property type="match status" value="1"/>
</dbReference>
<dbReference type="PANTHER" id="PTHR30524">
    <property type="entry name" value="MANNITOL-1-PHOSPHATE 5-DEHYDROGENASE"/>
    <property type="match status" value="1"/>
</dbReference>
<dbReference type="Pfam" id="PF01232">
    <property type="entry name" value="Mannitol_dh"/>
    <property type="match status" value="1"/>
</dbReference>
<dbReference type="Pfam" id="PF08125">
    <property type="entry name" value="Mannitol_dh_C"/>
    <property type="match status" value="1"/>
</dbReference>
<dbReference type="PRINTS" id="PR00084">
    <property type="entry name" value="MTLDHDRGNASE"/>
</dbReference>
<dbReference type="SUPFAM" id="SSF48179">
    <property type="entry name" value="6-phosphogluconate dehydrogenase C-terminal domain-like"/>
    <property type="match status" value="1"/>
</dbReference>
<dbReference type="SUPFAM" id="SSF51735">
    <property type="entry name" value="NAD(P)-binding Rossmann-fold domains"/>
    <property type="match status" value="1"/>
</dbReference>
<comment type="function">
    <text evidence="1">Catalyzes the NAD(H)-dependent interconversion of D-fructose 6-phosphate and D-mannitol 1-phosphate in the mannitol metabolic pathway.</text>
</comment>
<comment type="catalytic activity">
    <reaction>
        <text>D-mannitol 1-phosphate + NAD(+) = beta-D-fructose 6-phosphate + NADH + H(+)</text>
        <dbReference type="Rhea" id="RHEA:19661"/>
        <dbReference type="ChEBI" id="CHEBI:15378"/>
        <dbReference type="ChEBI" id="CHEBI:57540"/>
        <dbReference type="ChEBI" id="CHEBI:57634"/>
        <dbReference type="ChEBI" id="CHEBI:57945"/>
        <dbReference type="ChEBI" id="CHEBI:61381"/>
        <dbReference type="EC" id="1.1.1.17"/>
    </reaction>
</comment>
<comment type="subunit">
    <text evidence="1">Monomer.</text>
</comment>
<comment type="similarity">
    <text evidence="2">Belongs to the mannitol dehydrogenase family.</text>
</comment>